<proteinExistence type="inferred from homology"/>
<name>LRGB_BACAA</name>
<keyword id="KW-1003">Cell membrane</keyword>
<keyword id="KW-0204">Cytolysis</keyword>
<keyword id="KW-0472">Membrane</keyword>
<keyword id="KW-0812">Transmembrane</keyword>
<keyword id="KW-1133">Transmembrane helix</keyword>
<organism>
    <name type="scientific">Bacillus anthracis (strain A0248)</name>
    <dbReference type="NCBI Taxonomy" id="592021"/>
    <lineage>
        <taxon>Bacteria</taxon>
        <taxon>Bacillati</taxon>
        <taxon>Bacillota</taxon>
        <taxon>Bacilli</taxon>
        <taxon>Bacillales</taxon>
        <taxon>Bacillaceae</taxon>
        <taxon>Bacillus</taxon>
        <taxon>Bacillus cereus group</taxon>
    </lineage>
</organism>
<gene>
    <name evidence="1" type="primary">lrgB</name>
    <name type="ordered locus">BAA_5719</name>
</gene>
<protein>
    <recommendedName>
        <fullName evidence="1">Antiholin-like protein LrgB</fullName>
    </recommendedName>
</protein>
<evidence type="ECO:0000255" key="1">
    <source>
        <dbReference type="HAMAP-Rule" id="MF_01142"/>
    </source>
</evidence>
<dbReference type="EMBL" id="CP001598">
    <property type="protein sequence ID" value="ACQ47048.1"/>
    <property type="molecule type" value="Genomic_DNA"/>
</dbReference>
<dbReference type="RefSeq" id="WP_000168869.1">
    <property type="nucleotide sequence ID" value="NC_012659.1"/>
</dbReference>
<dbReference type="GeneID" id="93005687"/>
<dbReference type="KEGG" id="bai:BAA_5719"/>
<dbReference type="HOGENOM" id="CLU_082099_1_0_9"/>
<dbReference type="GO" id="GO:0005886">
    <property type="term" value="C:plasma membrane"/>
    <property type="evidence" value="ECO:0007669"/>
    <property type="project" value="UniProtKB-SubCell"/>
</dbReference>
<dbReference type="GO" id="GO:0019835">
    <property type="term" value="P:cytolysis"/>
    <property type="evidence" value="ECO:0007669"/>
    <property type="project" value="UniProtKB-UniRule"/>
</dbReference>
<dbReference type="GO" id="GO:0031640">
    <property type="term" value="P:killing of cells of another organism"/>
    <property type="evidence" value="ECO:0007669"/>
    <property type="project" value="UniProtKB-KW"/>
</dbReference>
<dbReference type="GO" id="GO:0012501">
    <property type="term" value="P:programmed cell death"/>
    <property type="evidence" value="ECO:0007669"/>
    <property type="project" value="UniProtKB-UniRule"/>
</dbReference>
<dbReference type="HAMAP" id="MF_01142">
    <property type="entry name" value="LrgB"/>
    <property type="match status" value="1"/>
</dbReference>
<dbReference type="InterPro" id="IPR024891">
    <property type="entry name" value="Antiholin-like_LrgB"/>
</dbReference>
<dbReference type="InterPro" id="IPR007300">
    <property type="entry name" value="CidB/LrgB"/>
</dbReference>
<dbReference type="NCBIfam" id="NF003291">
    <property type="entry name" value="PRK04288.1"/>
    <property type="match status" value="1"/>
</dbReference>
<dbReference type="PANTHER" id="PTHR30249:SF0">
    <property type="entry name" value="PLASTIDAL GLYCOLATE_GLYCERATE TRANSLOCATOR 1, CHLOROPLASTIC"/>
    <property type="match status" value="1"/>
</dbReference>
<dbReference type="PANTHER" id="PTHR30249">
    <property type="entry name" value="PUTATIVE SEROTONIN TRANSPORTER"/>
    <property type="match status" value="1"/>
</dbReference>
<dbReference type="Pfam" id="PF04172">
    <property type="entry name" value="LrgB"/>
    <property type="match status" value="1"/>
</dbReference>
<sequence length="230" mass="24349">MASTMTPYFGIVVSLIAYGIGTLLFKHSKGFFLFTPLFVAMVLGIVFLKVGNFTFEEYNTGGKMISFFLEPATIAFAIPLYKQVDKLKKYWWQILSAIVVGSICSVIVVFIVAKAIGLDTAVMNSMLPQAATTAIALPISESIGGIPAITSFAVIFNAVIVYALGALFLKTFRVKHPIAKGLALGTAGHALGVAVGIEMGEVEAAMASIAVTVVGVVTVVVIPMFMPFIG</sequence>
<comment type="function">
    <text evidence="1">Inhibits the expression or activity of extracellular murein hydrolases by interacting, possibly with LrgA, with the holin-like protein CidA. The LrgAB and CidA proteins may affect the proton motive force of the membrane. May be involved in programmed cell death (PCD), possibly triggering PCD in response to antibiotics and environmental stresses.</text>
</comment>
<comment type="subcellular location">
    <subcellularLocation>
        <location evidence="1">Cell membrane</location>
        <topology evidence="1">Multi-pass membrane protein</topology>
    </subcellularLocation>
</comment>
<comment type="similarity">
    <text evidence="1">Belongs to the CidB/LrgB family. LrgB subfamily.</text>
</comment>
<accession>C3P2J6</accession>
<feature type="chain" id="PRO_1000164100" description="Antiholin-like protein LrgB">
    <location>
        <begin position="1"/>
        <end position="230"/>
    </location>
</feature>
<feature type="transmembrane region" description="Helical" evidence="1">
    <location>
        <begin position="5"/>
        <end position="25"/>
    </location>
</feature>
<feature type="transmembrane region" description="Helical" evidence="1">
    <location>
        <begin position="30"/>
        <end position="50"/>
    </location>
</feature>
<feature type="transmembrane region" description="Helical" evidence="1">
    <location>
        <begin position="61"/>
        <end position="81"/>
    </location>
</feature>
<feature type="transmembrane region" description="Helical" evidence="1">
    <location>
        <begin position="92"/>
        <end position="112"/>
    </location>
</feature>
<feature type="transmembrane region" description="Helical" evidence="1">
    <location>
        <begin position="149"/>
        <end position="169"/>
    </location>
</feature>
<feature type="transmembrane region" description="Helical" evidence="1">
    <location>
        <begin position="177"/>
        <end position="197"/>
    </location>
</feature>
<feature type="transmembrane region" description="Helical" evidence="1">
    <location>
        <begin position="209"/>
        <end position="229"/>
    </location>
</feature>
<reference key="1">
    <citation type="submission" date="2009-04" db="EMBL/GenBank/DDBJ databases">
        <title>Genome sequence of Bacillus anthracis A0248.</title>
        <authorList>
            <person name="Dodson R.J."/>
            <person name="Munk A.C."/>
            <person name="Bruce D."/>
            <person name="Detter C."/>
            <person name="Tapia R."/>
            <person name="Sutton G."/>
            <person name="Sims D."/>
            <person name="Brettin T."/>
        </authorList>
    </citation>
    <scope>NUCLEOTIDE SEQUENCE [LARGE SCALE GENOMIC DNA]</scope>
    <source>
        <strain>A0248</strain>
    </source>
</reference>